<proteinExistence type="evidence at protein level"/>
<evidence type="ECO:0000250" key="1"/>
<evidence type="ECO:0000250" key="2">
    <source>
        <dbReference type="UniProtKB" id="Q12805"/>
    </source>
</evidence>
<evidence type="ECO:0000255" key="3"/>
<evidence type="ECO:0000255" key="4">
    <source>
        <dbReference type="PROSITE-ProRule" id="PRU00076"/>
    </source>
</evidence>
<evidence type="ECO:0000269" key="5">
    <source>
    </source>
</evidence>
<evidence type="ECO:0000269" key="6">
    <source>
    </source>
</evidence>
<evidence type="ECO:0000305" key="7"/>
<comment type="function">
    <text evidence="5">Binds EGFR, the EGF receptor, inducing EGFR autophosphorylation and the activation of downstream signaling pathways. May play a role in cell adhesion and migration. May function as a negative regulator of chondrocyte differentiation. In the olfactory epithelium, it may regulate glial cell migration, differentiation and the ability of glial cells to support neuronal neurite outgrowth.</text>
</comment>
<comment type="subunit">
    <text evidence="2">Interacts with ECM1. Interacts with TIMP3.</text>
</comment>
<comment type="subcellular location">
    <subcellularLocation>
        <location evidence="5">Secreted</location>
        <location evidence="5">Extracellular space</location>
    </subcellularLocation>
    <subcellularLocation>
        <location evidence="5">Secreted</location>
        <location evidence="5">Extracellular space</location>
        <location evidence="5">Extracellular matrix</location>
    </subcellularLocation>
    <text evidence="5">Localizes to the lamina propria underneath the olfactory epithelium.</text>
</comment>
<comment type="tissue specificity">
    <text evidence="6">Expressed by olfactory ensheathing cells (at protein level). Detected in lung, intestine and kidney.</text>
</comment>
<comment type="similarity">
    <text evidence="7">Belongs to the fibulin family.</text>
</comment>
<dbReference type="EMBL" id="D89730">
    <property type="protein sequence ID" value="BAA22265.1"/>
    <property type="molecule type" value="mRNA"/>
</dbReference>
<dbReference type="PIR" id="JC5621">
    <property type="entry name" value="JC5621"/>
</dbReference>
<dbReference type="FunCoup" id="O35568">
    <property type="interactions" value="150"/>
</dbReference>
<dbReference type="STRING" id="10116.ENSRNOP00000004764"/>
<dbReference type="GlyCosmos" id="O35568">
    <property type="glycosylation" value="1 site, No reported glycans"/>
</dbReference>
<dbReference type="GlyGen" id="O35568">
    <property type="glycosylation" value="1 site"/>
</dbReference>
<dbReference type="PhosphoSitePlus" id="O35568"/>
<dbReference type="PaxDb" id="10116-ENSRNOP00000004764"/>
<dbReference type="UCSC" id="RGD:1308528">
    <property type="organism name" value="rat"/>
</dbReference>
<dbReference type="AGR" id="RGD:1308528"/>
<dbReference type="RGD" id="1308528">
    <property type="gene designation" value="Efemp1"/>
</dbReference>
<dbReference type="eggNOG" id="KOG1217">
    <property type="taxonomic scope" value="Eukaryota"/>
</dbReference>
<dbReference type="InParanoid" id="O35568"/>
<dbReference type="PhylomeDB" id="O35568"/>
<dbReference type="PRO" id="PR:O35568"/>
<dbReference type="Proteomes" id="UP000002494">
    <property type="component" value="Unplaced"/>
</dbReference>
<dbReference type="GO" id="GO:0005604">
    <property type="term" value="C:basement membrane"/>
    <property type="evidence" value="ECO:0000314"/>
    <property type="project" value="RGD"/>
</dbReference>
<dbReference type="GO" id="GO:0031012">
    <property type="term" value="C:extracellular matrix"/>
    <property type="evidence" value="ECO:0000266"/>
    <property type="project" value="RGD"/>
</dbReference>
<dbReference type="GO" id="GO:0005615">
    <property type="term" value="C:extracellular space"/>
    <property type="evidence" value="ECO:0000250"/>
    <property type="project" value="UniProtKB"/>
</dbReference>
<dbReference type="GO" id="GO:0005509">
    <property type="term" value="F:calcium ion binding"/>
    <property type="evidence" value="ECO:0007669"/>
    <property type="project" value="InterPro"/>
</dbReference>
<dbReference type="GO" id="GO:0005006">
    <property type="term" value="F:epidermal growth factor receptor activity"/>
    <property type="evidence" value="ECO:0000250"/>
    <property type="project" value="UniProtKB"/>
</dbReference>
<dbReference type="GO" id="GO:0005154">
    <property type="term" value="F:epidermal growth factor receptor binding"/>
    <property type="evidence" value="ECO:0000250"/>
    <property type="project" value="UniProtKB"/>
</dbReference>
<dbReference type="GO" id="GO:0008083">
    <property type="term" value="F:growth factor activity"/>
    <property type="evidence" value="ECO:0007669"/>
    <property type="project" value="UniProtKB-KW"/>
</dbReference>
<dbReference type="GO" id="GO:0043010">
    <property type="term" value="P:camera-type eye development"/>
    <property type="evidence" value="ECO:0000266"/>
    <property type="project" value="RGD"/>
</dbReference>
<dbReference type="GO" id="GO:0048048">
    <property type="term" value="P:embryonic eye morphogenesis"/>
    <property type="evidence" value="ECO:0000266"/>
    <property type="project" value="RGD"/>
</dbReference>
<dbReference type="GO" id="GO:0007173">
    <property type="term" value="P:epidermal growth factor receptor signaling pathway"/>
    <property type="evidence" value="ECO:0000250"/>
    <property type="project" value="UniProtKB"/>
</dbReference>
<dbReference type="GO" id="GO:0032331">
    <property type="term" value="P:negative regulation of chondrocyte differentiation"/>
    <property type="evidence" value="ECO:0000250"/>
    <property type="project" value="UniProtKB"/>
</dbReference>
<dbReference type="GO" id="GO:0010977">
    <property type="term" value="P:negative regulation of neuron projection development"/>
    <property type="evidence" value="ECO:0000314"/>
    <property type="project" value="RGD"/>
</dbReference>
<dbReference type="GO" id="GO:0018108">
    <property type="term" value="P:peptidyl-tyrosine phosphorylation"/>
    <property type="evidence" value="ECO:0000250"/>
    <property type="project" value="UniProtKB"/>
</dbReference>
<dbReference type="GO" id="GO:0008284">
    <property type="term" value="P:positive regulation of cell population proliferation"/>
    <property type="evidence" value="ECO:0000315"/>
    <property type="project" value="RGD"/>
</dbReference>
<dbReference type="GO" id="GO:0031346">
    <property type="term" value="P:positive regulation of cell projection organization"/>
    <property type="evidence" value="ECO:0000314"/>
    <property type="project" value="RGD"/>
</dbReference>
<dbReference type="GO" id="GO:0048050">
    <property type="term" value="P:post-embryonic eye morphogenesis"/>
    <property type="evidence" value="ECO:0000266"/>
    <property type="project" value="RGD"/>
</dbReference>
<dbReference type="GO" id="GO:0006355">
    <property type="term" value="P:regulation of DNA-templated transcription"/>
    <property type="evidence" value="ECO:0000250"/>
    <property type="project" value="UniProtKB"/>
</dbReference>
<dbReference type="GO" id="GO:1903975">
    <property type="term" value="P:regulation of glial cell migration"/>
    <property type="evidence" value="ECO:0000314"/>
    <property type="project" value="RGD"/>
</dbReference>
<dbReference type="CDD" id="cd00054">
    <property type="entry name" value="EGF_CA"/>
    <property type="match status" value="4"/>
</dbReference>
<dbReference type="FunFam" id="2.10.25.10:FF:000323">
    <property type="entry name" value="EGF-containing fibulin-like extracellular matrix protein 1"/>
    <property type="match status" value="1"/>
</dbReference>
<dbReference type="FunFam" id="2.10.25.10:FF:000418">
    <property type="entry name" value="EGF-containing fibulin-like extracellular matrix protein 1"/>
    <property type="match status" value="1"/>
</dbReference>
<dbReference type="FunFam" id="2.10.25.10:FF:000201">
    <property type="entry name" value="EGF-containing fibulin-like extracellular matrix protein 2"/>
    <property type="match status" value="1"/>
</dbReference>
<dbReference type="FunFam" id="2.10.25.10:FF:000240">
    <property type="entry name" value="Vitamin K-dependent protein S"/>
    <property type="match status" value="1"/>
</dbReference>
<dbReference type="Gene3D" id="2.10.25.10">
    <property type="entry name" value="Laminin"/>
    <property type="match status" value="5"/>
</dbReference>
<dbReference type="InterPro" id="IPR026823">
    <property type="entry name" value="cEGF"/>
</dbReference>
<dbReference type="InterPro" id="IPR001881">
    <property type="entry name" value="EGF-like_Ca-bd_dom"/>
</dbReference>
<dbReference type="InterPro" id="IPR000742">
    <property type="entry name" value="EGF-like_dom"/>
</dbReference>
<dbReference type="InterPro" id="IPR000152">
    <property type="entry name" value="EGF-type_Asp/Asn_hydroxyl_site"/>
</dbReference>
<dbReference type="InterPro" id="IPR018097">
    <property type="entry name" value="EGF_Ca-bd_CS"/>
</dbReference>
<dbReference type="InterPro" id="IPR055088">
    <property type="entry name" value="Fibulin_C"/>
</dbReference>
<dbReference type="InterPro" id="IPR009030">
    <property type="entry name" value="Growth_fac_rcpt_cys_sf"/>
</dbReference>
<dbReference type="InterPro" id="IPR052235">
    <property type="entry name" value="Nephronectin_domain"/>
</dbReference>
<dbReference type="InterPro" id="IPR049883">
    <property type="entry name" value="NOTCH1_EGF-like"/>
</dbReference>
<dbReference type="PANTHER" id="PTHR24050">
    <property type="entry name" value="PA14 DOMAIN-CONTAINING PROTEIN"/>
    <property type="match status" value="1"/>
</dbReference>
<dbReference type="PANTHER" id="PTHR24050:SF28">
    <property type="entry name" value="UROMODULIN-LIKE"/>
    <property type="match status" value="1"/>
</dbReference>
<dbReference type="Pfam" id="PF12662">
    <property type="entry name" value="cEGF"/>
    <property type="match status" value="3"/>
</dbReference>
<dbReference type="Pfam" id="PF07645">
    <property type="entry name" value="EGF_CA"/>
    <property type="match status" value="2"/>
</dbReference>
<dbReference type="Pfam" id="PF22914">
    <property type="entry name" value="Fibulin_C"/>
    <property type="match status" value="1"/>
</dbReference>
<dbReference type="SMART" id="SM00181">
    <property type="entry name" value="EGF"/>
    <property type="match status" value="5"/>
</dbReference>
<dbReference type="SMART" id="SM00179">
    <property type="entry name" value="EGF_CA"/>
    <property type="match status" value="6"/>
</dbReference>
<dbReference type="SUPFAM" id="SSF57196">
    <property type="entry name" value="EGF/Laminin"/>
    <property type="match status" value="2"/>
</dbReference>
<dbReference type="SUPFAM" id="SSF57184">
    <property type="entry name" value="Growth factor receptor domain"/>
    <property type="match status" value="1"/>
</dbReference>
<dbReference type="PROSITE" id="PS00010">
    <property type="entry name" value="ASX_HYDROXYL"/>
    <property type="match status" value="4"/>
</dbReference>
<dbReference type="PROSITE" id="PS01186">
    <property type="entry name" value="EGF_2"/>
    <property type="match status" value="4"/>
</dbReference>
<dbReference type="PROSITE" id="PS50026">
    <property type="entry name" value="EGF_3"/>
    <property type="match status" value="4"/>
</dbReference>
<dbReference type="PROSITE" id="PS01187">
    <property type="entry name" value="EGF_CA"/>
    <property type="match status" value="6"/>
</dbReference>
<feature type="signal peptide" evidence="3">
    <location>
        <begin position="1"/>
        <end position="17"/>
    </location>
</feature>
<feature type="chain" id="PRO_0000007573" description="EGF-containing fibulin-like extracellular matrix protein 1">
    <location>
        <begin position="18"/>
        <end position="493"/>
    </location>
</feature>
<feature type="domain" description="EGF-like 1; atypical" evidence="4">
    <location>
        <begin position="26"/>
        <end position="71"/>
    </location>
</feature>
<feature type="domain" description="EGF-like 2; calcium-binding" evidence="4">
    <location>
        <begin position="173"/>
        <end position="213"/>
    </location>
</feature>
<feature type="domain" description="EGF-like 3; calcium-binding" evidence="4">
    <location>
        <begin position="214"/>
        <end position="253"/>
    </location>
</feature>
<feature type="domain" description="EGF-like 4; calcium-binding" evidence="4">
    <location>
        <begin position="254"/>
        <end position="293"/>
    </location>
</feature>
<feature type="domain" description="EGF-like 5; calcium-binding" evidence="4">
    <location>
        <begin position="294"/>
        <end position="333"/>
    </location>
</feature>
<feature type="domain" description="EGF-like 6; calcium-binding" evidence="4">
    <location>
        <begin position="334"/>
        <end position="378"/>
    </location>
</feature>
<feature type="region of interest" description="Mediates interaction with TIMP3" evidence="1">
    <location>
        <begin position="259"/>
        <end position="493"/>
    </location>
</feature>
<feature type="glycosylation site" description="N-linked (GlcNAc...) asparagine" evidence="3">
    <location>
        <position position="249"/>
    </location>
</feature>
<feature type="disulfide bond" evidence="4">
    <location>
        <begin position="177"/>
        <end position="190"/>
    </location>
</feature>
<feature type="disulfide bond" evidence="4">
    <location>
        <begin position="184"/>
        <end position="199"/>
    </location>
</feature>
<feature type="disulfide bond" evidence="4">
    <location>
        <begin position="201"/>
        <end position="212"/>
    </location>
</feature>
<feature type="disulfide bond" evidence="4">
    <location>
        <begin position="218"/>
        <end position="228"/>
    </location>
</feature>
<feature type="disulfide bond" evidence="4">
    <location>
        <begin position="224"/>
        <end position="237"/>
    </location>
</feature>
<feature type="disulfide bond" evidence="4">
    <location>
        <begin position="239"/>
        <end position="252"/>
    </location>
</feature>
<feature type="disulfide bond" evidence="4">
    <location>
        <begin position="258"/>
        <end position="268"/>
    </location>
</feature>
<feature type="disulfide bond" evidence="4">
    <location>
        <begin position="264"/>
        <end position="277"/>
    </location>
</feature>
<feature type="disulfide bond" evidence="4">
    <location>
        <begin position="279"/>
        <end position="292"/>
    </location>
</feature>
<feature type="disulfide bond" evidence="4">
    <location>
        <begin position="298"/>
        <end position="309"/>
    </location>
</feature>
<feature type="disulfide bond" evidence="4">
    <location>
        <begin position="305"/>
        <end position="318"/>
    </location>
</feature>
<feature type="disulfide bond" evidence="4">
    <location>
        <begin position="320"/>
        <end position="332"/>
    </location>
</feature>
<feature type="disulfide bond" evidence="4">
    <location>
        <begin position="338"/>
        <end position="350"/>
    </location>
</feature>
<feature type="disulfide bond" evidence="4">
    <location>
        <begin position="344"/>
        <end position="359"/>
    </location>
</feature>
<feature type="disulfide bond" evidence="4">
    <location>
        <begin position="365"/>
        <end position="377"/>
    </location>
</feature>
<protein>
    <recommendedName>
        <fullName>EGF-containing fibulin-like extracellular matrix protein 1</fullName>
    </recommendedName>
    <alternativeName>
        <fullName>Fibulin-3</fullName>
        <shortName>FIBL-3</shortName>
    </alternativeName>
    <alternativeName>
        <fullName>T16 protein</fullName>
    </alternativeName>
</protein>
<keyword id="KW-0106">Calcium</keyword>
<keyword id="KW-1015">Disulfide bond</keyword>
<keyword id="KW-0245">EGF-like domain</keyword>
<keyword id="KW-0272">Extracellular matrix</keyword>
<keyword id="KW-0325">Glycoprotein</keyword>
<keyword id="KW-0339">Growth factor</keyword>
<keyword id="KW-1185">Reference proteome</keyword>
<keyword id="KW-0677">Repeat</keyword>
<keyword id="KW-0964">Secreted</keyword>
<keyword id="KW-0732">Signal</keyword>
<accession>O35568</accession>
<organism>
    <name type="scientific">Rattus norvegicus</name>
    <name type="common">Rat</name>
    <dbReference type="NCBI Taxonomy" id="10116"/>
    <lineage>
        <taxon>Eukaryota</taxon>
        <taxon>Metazoa</taxon>
        <taxon>Chordata</taxon>
        <taxon>Craniata</taxon>
        <taxon>Vertebrata</taxon>
        <taxon>Euteleostomi</taxon>
        <taxon>Mammalia</taxon>
        <taxon>Eutheria</taxon>
        <taxon>Euarchontoglires</taxon>
        <taxon>Glires</taxon>
        <taxon>Rodentia</taxon>
        <taxon>Myomorpha</taxon>
        <taxon>Muroidea</taxon>
        <taxon>Muridae</taxon>
        <taxon>Murinae</taxon>
        <taxon>Rattus</taxon>
    </lineage>
</organism>
<name>FBLN3_RAT</name>
<sequence length="493" mass="54596">MLQTVFLTMLTLALVKSQVTEETITYTQCTDGYEWDPVRQQCKDIDECDIVPDACKGGMKCVNHYGGYLCLPKTAQIIVNNEQPQQETPAAEASSGAATGTIAARSMATSGVIPGGGFIASATAVAGPEVQTGRNNFVIRRNPADPQRIPSNPSHRIQCAAGYEQSEHNVCQDIDECTSGTHNCRLDQVCINLRGSFTCHCLPGYQKRGEQCVDIDECSVPPYCHQGCVNTPGSFYCQCNPGFQLAANNYTCVDINECDASNQCAQQCYNILGSFICQCNQGYELSSDRLNCEDIDECRTSSYLCQYQCVNEPGKFSCMCPQGYQVVRSRTCQDINECETTNECREDEMCWNYHGGFRCYPQNPCQDPYVLTSENRCVCPVSNTMCRDVPQSIVYKYMNIRSDRSVPSDIFQIQATTIYANTINTFRIKSGNENGEFYLRQTSPVSAMLVLVKSLTGPREHIVGLEMLTVSSIGTFRTSSVLRLTIIVGPFSF</sequence>
<gene>
    <name type="primary">Efemp1</name>
    <name type="synonym">Fbln3</name>
</gene>
<reference key="1">
    <citation type="journal article" date="1997" name="Biochem. Biophys. Res. Commun.">
        <title>Interaction of DA41, a DAN-binding protein, with the epidermal growth factor-like protein, S(1-5).</title>
        <authorList>
            <person name="Ozaki T."/>
            <person name="Kondo K."/>
            <person name="Nakamura Y."/>
            <person name="Ichimiya S."/>
            <person name="Nakagawara A."/>
            <person name="Sakiyama S."/>
        </authorList>
    </citation>
    <scope>NUCLEOTIDE SEQUENCE [MRNA]</scope>
    <scope>TISSUE SPECIFICITY</scope>
    <source>
        <tissue>Lung</tissue>
    </source>
</reference>
<reference key="2">
    <citation type="journal article" date="2009" name="Glia">
        <title>The glycoprotein fibulin-3 regulates morphology and motility of olfactory ensheathing cells in vitro.</title>
        <authorList>
            <person name="Vukovic J."/>
            <person name="Ruitenberg M.J."/>
            <person name="Roet K."/>
            <person name="Franssen E."/>
            <person name="Arulpragasam A."/>
            <person name="Sasaki T."/>
            <person name="Verhaagen J."/>
            <person name="Harvey A.R."/>
            <person name="Busfield S.J."/>
            <person name="Plant G.W."/>
        </authorList>
    </citation>
    <scope>FUNCTION</scope>
    <scope>SUBCELLULAR LOCATION</scope>
</reference>